<keyword id="KW-0963">Cytoplasm</keyword>
<keyword id="KW-0489">Methyltransferase</keyword>
<keyword id="KW-1185">Reference proteome</keyword>
<keyword id="KW-0694">RNA-binding</keyword>
<keyword id="KW-0698">rRNA processing</keyword>
<keyword id="KW-0949">S-adenosyl-L-methionine</keyword>
<keyword id="KW-0808">Transferase</keyword>
<evidence type="ECO:0000255" key="1">
    <source>
        <dbReference type="HAMAP-Rule" id="MF_00607"/>
    </source>
</evidence>
<reference key="1">
    <citation type="journal article" date="2006" name="Proc. Natl. Acad. Sci. U.S.A.">
        <title>The partitioned Rhizobium etli genome: genetic and metabolic redundancy in seven interacting replicons.</title>
        <authorList>
            <person name="Gonzalez V."/>
            <person name="Santamaria R.I."/>
            <person name="Bustos P."/>
            <person name="Hernandez-Gonzalez I."/>
            <person name="Medrano-Soto A."/>
            <person name="Moreno-Hagelsieb G."/>
            <person name="Janga S.C."/>
            <person name="Ramirez M.A."/>
            <person name="Jimenez-Jacinto V."/>
            <person name="Collado-Vides J."/>
            <person name="Davila G."/>
        </authorList>
    </citation>
    <scope>NUCLEOTIDE SEQUENCE [LARGE SCALE GENOMIC DNA]</scope>
    <source>
        <strain>ATCC 51251 / DSM 11541 / JCM 21823 / NBRC 15573 / CFN 42</strain>
    </source>
</reference>
<proteinExistence type="inferred from homology"/>
<feature type="chain" id="PRO_0000257330" description="Ribosomal RNA small subunit methyltransferase A">
    <location>
        <begin position="1"/>
        <end position="275"/>
    </location>
</feature>
<feature type="binding site" evidence="1">
    <location>
        <position position="28"/>
    </location>
    <ligand>
        <name>S-adenosyl-L-methionine</name>
        <dbReference type="ChEBI" id="CHEBI:59789"/>
    </ligand>
</feature>
<feature type="binding site" evidence="1">
    <location>
        <position position="30"/>
    </location>
    <ligand>
        <name>S-adenosyl-L-methionine</name>
        <dbReference type="ChEBI" id="CHEBI:59789"/>
    </ligand>
</feature>
<feature type="binding site" evidence="1">
    <location>
        <position position="55"/>
    </location>
    <ligand>
        <name>S-adenosyl-L-methionine</name>
        <dbReference type="ChEBI" id="CHEBI:59789"/>
    </ligand>
</feature>
<feature type="binding site" evidence="1">
    <location>
        <position position="77"/>
    </location>
    <ligand>
        <name>S-adenosyl-L-methionine</name>
        <dbReference type="ChEBI" id="CHEBI:59789"/>
    </ligand>
</feature>
<feature type="binding site" evidence="1">
    <location>
        <position position="103"/>
    </location>
    <ligand>
        <name>S-adenosyl-L-methionine</name>
        <dbReference type="ChEBI" id="CHEBI:59789"/>
    </ligand>
</feature>
<feature type="binding site" evidence="1">
    <location>
        <position position="123"/>
    </location>
    <ligand>
        <name>S-adenosyl-L-methionine</name>
        <dbReference type="ChEBI" id="CHEBI:59789"/>
    </ligand>
</feature>
<comment type="function">
    <text evidence="1">Specifically dimethylates two adjacent adenosines (A1518 and A1519) in the loop of a conserved hairpin near the 3'-end of 16S rRNA in the 30S particle. May play a critical role in biogenesis of 30S subunits.</text>
</comment>
<comment type="catalytic activity">
    <reaction evidence="1">
        <text>adenosine(1518)/adenosine(1519) in 16S rRNA + 4 S-adenosyl-L-methionine = N(6)-dimethyladenosine(1518)/N(6)-dimethyladenosine(1519) in 16S rRNA + 4 S-adenosyl-L-homocysteine + 4 H(+)</text>
        <dbReference type="Rhea" id="RHEA:19609"/>
        <dbReference type="Rhea" id="RHEA-COMP:10232"/>
        <dbReference type="Rhea" id="RHEA-COMP:10233"/>
        <dbReference type="ChEBI" id="CHEBI:15378"/>
        <dbReference type="ChEBI" id="CHEBI:57856"/>
        <dbReference type="ChEBI" id="CHEBI:59789"/>
        <dbReference type="ChEBI" id="CHEBI:74411"/>
        <dbReference type="ChEBI" id="CHEBI:74493"/>
        <dbReference type="EC" id="2.1.1.182"/>
    </reaction>
</comment>
<comment type="subcellular location">
    <subcellularLocation>
        <location evidence="1">Cytoplasm</location>
    </subcellularLocation>
</comment>
<comment type="similarity">
    <text evidence="1">Belongs to the class I-like SAM-binding methyltransferase superfamily. rRNA adenine N(6)-methyltransferase family. RsmA subfamily.</text>
</comment>
<dbReference type="EC" id="2.1.1.182" evidence="1"/>
<dbReference type="EMBL" id="CP000133">
    <property type="protein sequence ID" value="ABC90252.1"/>
    <property type="molecule type" value="Genomic_DNA"/>
</dbReference>
<dbReference type="RefSeq" id="WP_011424782.1">
    <property type="nucleotide sequence ID" value="NC_007761.1"/>
</dbReference>
<dbReference type="SMR" id="Q2KA84"/>
<dbReference type="KEGG" id="ret:RHE_CH01449"/>
<dbReference type="eggNOG" id="COG0030">
    <property type="taxonomic scope" value="Bacteria"/>
</dbReference>
<dbReference type="HOGENOM" id="CLU_041220_0_1_5"/>
<dbReference type="OrthoDB" id="9814755at2"/>
<dbReference type="Proteomes" id="UP000001936">
    <property type="component" value="Chromosome"/>
</dbReference>
<dbReference type="GO" id="GO:0005829">
    <property type="term" value="C:cytosol"/>
    <property type="evidence" value="ECO:0007669"/>
    <property type="project" value="TreeGrafter"/>
</dbReference>
<dbReference type="GO" id="GO:0052908">
    <property type="term" value="F:16S rRNA (adenine(1518)-N(6)/adenine(1519)-N(6))-dimethyltransferase activity"/>
    <property type="evidence" value="ECO:0007669"/>
    <property type="project" value="UniProtKB-EC"/>
</dbReference>
<dbReference type="GO" id="GO:0003723">
    <property type="term" value="F:RNA binding"/>
    <property type="evidence" value="ECO:0007669"/>
    <property type="project" value="UniProtKB-KW"/>
</dbReference>
<dbReference type="CDD" id="cd02440">
    <property type="entry name" value="AdoMet_MTases"/>
    <property type="match status" value="1"/>
</dbReference>
<dbReference type="FunFam" id="1.10.8.100:FF:000001">
    <property type="entry name" value="Ribosomal RNA small subunit methyltransferase A"/>
    <property type="match status" value="1"/>
</dbReference>
<dbReference type="Gene3D" id="1.10.8.100">
    <property type="entry name" value="Ribosomal RNA adenine dimethylase-like, domain 2"/>
    <property type="match status" value="1"/>
</dbReference>
<dbReference type="Gene3D" id="3.40.50.150">
    <property type="entry name" value="Vaccinia Virus protein VP39"/>
    <property type="match status" value="1"/>
</dbReference>
<dbReference type="HAMAP" id="MF_00607">
    <property type="entry name" value="16SrRNA_methyltr_A"/>
    <property type="match status" value="1"/>
</dbReference>
<dbReference type="InterPro" id="IPR001737">
    <property type="entry name" value="KsgA/Erm"/>
</dbReference>
<dbReference type="InterPro" id="IPR023165">
    <property type="entry name" value="rRNA_Ade_diMease-like_C"/>
</dbReference>
<dbReference type="InterPro" id="IPR020596">
    <property type="entry name" value="rRNA_Ade_Mease_Trfase_CS"/>
</dbReference>
<dbReference type="InterPro" id="IPR020598">
    <property type="entry name" value="rRNA_Ade_methylase_Trfase_N"/>
</dbReference>
<dbReference type="InterPro" id="IPR011530">
    <property type="entry name" value="rRNA_adenine_dimethylase"/>
</dbReference>
<dbReference type="InterPro" id="IPR029063">
    <property type="entry name" value="SAM-dependent_MTases_sf"/>
</dbReference>
<dbReference type="NCBIfam" id="TIGR00755">
    <property type="entry name" value="ksgA"/>
    <property type="match status" value="1"/>
</dbReference>
<dbReference type="PANTHER" id="PTHR11727">
    <property type="entry name" value="DIMETHYLADENOSINE TRANSFERASE"/>
    <property type="match status" value="1"/>
</dbReference>
<dbReference type="PANTHER" id="PTHR11727:SF7">
    <property type="entry name" value="DIMETHYLADENOSINE TRANSFERASE-RELATED"/>
    <property type="match status" value="1"/>
</dbReference>
<dbReference type="Pfam" id="PF00398">
    <property type="entry name" value="RrnaAD"/>
    <property type="match status" value="1"/>
</dbReference>
<dbReference type="SMART" id="SM00650">
    <property type="entry name" value="rADc"/>
    <property type="match status" value="1"/>
</dbReference>
<dbReference type="SUPFAM" id="SSF53335">
    <property type="entry name" value="S-adenosyl-L-methionine-dependent methyltransferases"/>
    <property type="match status" value="1"/>
</dbReference>
<dbReference type="PROSITE" id="PS01131">
    <property type="entry name" value="RRNA_A_DIMETH"/>
    <property type="match status" value="1"/>
</dbReference>
<dbReference type="PROSITE" id="PS51689">
    <property type="entry name" value="SAM_RNA_A_N6_MT"/>
    <property type="match status" value="1"/>
</dbReference>
<name>RSMA_RHIEC</name>
<protein>
    <recommendedName>
        <fullName evidence="1">Ribosomal RNA small subunit methyltransferase A</fullName>
        <ecNumber evidence="1">2.1.1.182</ecNumber>
    </recommendedName>
    <alternativeName>
        <fullName evidence="1">16S rRNA (adenine(1518)-N(6)/adenine(1519)-N(6))-dimethyltransferase</fullName>
    </alternativeName>
    <alternativeName>
        <fullName evidence="1">16S rRNA dimethyladenosine transferase</fullName>
    </alternativeName>
    <alternativeName>
        <fullName evidence="1">16S rRNA dimethylase</fullName>
    </alternativeName>
    <alternativeName>
        <fullName evidence="1">S-adenosylmethionine-6-N', N'-adenosyl(rRNA) dimethyltransferase</fullName>
    </alternativeName>
</protein>
<sequence>MAALDGLPPLRDVIQRHGLDARKALGQNFLLDLNLTQKVARTAGALEETTVFEVGPGPGGLTRAILALGAKKVIAVERDARCLPALAEIADHYPGRLEVIEGDALKTDFEALAPEGPVKIIANLPYNVGTQLLVNWLLPKAWPPFWQSLTLMFQKEVGERIVAGEDDDHYGRLGVLCGWRTDARMAFDVPPQAFTPPPKVTSTVVHLLPRENPVQCAVANLEKVTQAAFGQRRKMLRQSLKPLGGESLLVKAGIDPARRAETLSVEEFCLLANNL</sequence>
<gene>
    <name evidence="1" type="primary">rsmA</name>
    <name evidence="1" type="synonym">ksgA</name>
    <name type="ordered locus">RHE_CH01449</name>
</gene>
<organism>
    <name type="scientific">Rhizobium etli (strain ATCC 51251 / DSM 11541 / JCM 21823 / NBRC 15573 / CFN 42)</name>
    <dbReference type="NCBI Taxonomy" id="347834"/>
    <lineage>
        <taxon>Bacteria</taxon>
        <taxon>Pseudomonadati</taxon>
        <taxon>Pseudomonadota</taxon>
        <taxon>Alphaproteobacteria</taxon>
        <taxon>Hyphomicrobiales</taxon>
        <taxon>Rhizobiaceae</taxon>
        <taxon>Rhizobium/Agrobacterium group</taxon>
        <taxon>Rhizobium</taxon>
    </lineage>
</organism>
<accession>Q2KA84</accession>